<reference key="1">
    <citation type="journal article" date="2003" name="Proc. Natl. Acad. Sci. U.S.A.">
        <title>The complete genome sequence of Mycobacterium bovis.</title>
        <authorList>
            <person name="Garnier T."/>
            <person name="Eiglmeier K."/>
            <person name="Camus J.-C."/>
            <person name="Medina N."/>
            <person name="Mansoor H."/>
            <person name="Pryor M."/>
            <person name="Duthoy S."/>
            <person name="Grondin S."/>
            <person name="Lacroix C."/>
            <person name="Monsempe C."/>
            <person name="Simon S."/>
            <person name="Harris B."/>
            <person name="Atkin R."/>
            <person name="Doggett J."/>
            <person name="Mayes R."/>
            <person name="Keating L."/>
            <person name="Wheeler P.R."/>
            <person name="Parkhill J."/>
            <person name="Barrell B.G."/>
            <person name="Cole S.T."/>
            <person name="Gordon S.V."/>
            <person name="Hewinson R.G."/>
        </authorList>
    </citation>
    <scope>NUCLEOTIDE SEQUENCE [LARGE SCALE GENOMIC DNA]</scope>
    <source>
        <strain>ATCC BAA-935 / AF2122/97</strain>
    </source>
</reference>
<reference key="2">
    <citation type="journal article" date="2017" name="Genome Announc.">
        <title>Updated reference genome sequence and annotation of Mycobacterium bovis AF2122/97.</title>
        <authorList>
            <person name="Malone K.M."/>
            <person name="Farrell D."/>
            <person name="Stuber T.P."/>
            <person name="Schubert O.T."/>
            <person name="Aebersold R."/>
            <person name="Robbe-Austerman S."/>
            <person name="Gordon S.V."/>
        </authorList>
    </citation>
    <scope>NUCLEOTIDE SEQUENCE [LARGE SCALE GENOMIC DNA]</scope>
    <scope>GENOME REANNOTATION</scope>
    <source>
        <strain>ATCC BAA-935 / AF2122/97</strain>
    </source>
</reference>
<keyword id="KW-1003">Cell membrane</keyword>
<keyword id="KW-0472">Membrane</keyword>
<keyword id="KW-1185">Reference proteome</keyword>
<keyword id="KW-0812">Transmembrane</keyword>
<keyword id="KW-1133">Transmembrane helix</keyword>
<protein>
    <recommendedName>
        <fullName>UPF0719 transmembrane protein Mb2631</fullName>
    </recommendedName>
</protein>
<proteinExistence type="inferred from homology"/>
<organism>
    <name type="scientific">Mycobacterium bovis (strain ATCC BAA-935 / AF2122/97)</name>
    <dbReference type="NCBI Taxonomy" id="233413"/>
    <lineage>
        <taxon>Bacteria</taxon>
        <taxon>Bacillati</taxon>
        <taxon>Actinomycetota</taxon>
        <taxon>Actinomycetes</taxon>
        <taxon>Mycobacteriales</taxon>
        <taxon>Mycobacteriaceae</taxon>
        <taxon>Mycobacterium</taxon>
        <taxon>Mycobacterium tuberculosis complex</taxon>
    </lineage>
</organism>
<comment type="subcellular location">
    <subcellularLocation>
        <location evidence="2">Cell membrane</location>
        <topology evidence="2">Multi-pass membrane protein</topology>
    </subcellularLocation>
</comment>
<comment type="similarity">
    <text evidence="2">Belongs to the UPF0719 family.</text>
</comment>
<comment type="sequence caution" evidence="2">
    <conflict type="erroneous initiation">
        <sequence resource="EMBL-CDS" id="SIU01249"/>
    </conflict>
    <text>Truncated N-terminus.</text>
</comment>
<sequence length="152" mass="15648">MYQAGVDFGTISLTPILHGVVATVLYFLVGAAVLVAGFLMVNLLTPGDLRRLVFIDRRPNAVVLAATMYVALAIVTIAAIYASSNQLAQGLIGVAVYGIVGVALQGVALVILEIAVPGRFREHIDAPALHPAVFATAVMLLAVAGVIAAALS</sequence>
<evidence type="ECO:0000255" key="1"/>
<evidence type="ECO:0000305" key="2"/>
<name>Y2631_MYCBO</name>
<dbReference type="EMBL" id="LT708304">
    <property type="protein sequence ID" value="SIU01249.1"/>
    <property type="status" value="ALT_INIT"/>
    <property type="molecule type" value="Genomic_DNA"/>
</dbReference>
<dbReference type="RefSeq" id="NP_856277.1">
    <property type="nucleotide sequence ID" value="NC_002945.3"/>
</dbReference>
<dbReference type="RefSeq" id="WP_003413451.1">
    <property type="nucleotide sequence ID" value="NC_002945.4"/>
</dbReference>
<dbReference type="KEGG" id="mbo:BQ2027_MB2631"/>
<dbReference type="PATRIC" id="fig|233413.5.peg.2892"/>
<dbReference type="Proteomes" id="UP000001419">
    <property type="component" value="Chromosome"/>
</dbReference>
<dbReference type="GO" id="GO:0005886">
    <property type="term" value="C:plasma membrane"/>
    <property type="evidence" value="ECO:0007669"/>
    <property type="project" value="UniProtKB-SubCell"/>
</dbReference>
<dbReference type="InterPro" id="IPR007140">
    <property type="entry name" value="DUF350"/>
</dbReference>
<dbReference type="Pfam" id="PF03994">
    <property type="entry name" value="DUF350"/>
    <property type="match status" value="1"/>
</dbReference>
<gene>
    <name type="ordered locus">BQ2027_MB2631</name>
</gene>
<feature type="chain" id="PRO_0000104069" description="UPF0719 transmembrane protein Mb2631">
    <location>
        <begin position="1"/>
        <end position="152"/>
    </location>
</feature>
<feature type="transmembrane region" description="Helical" evidence="1">
    <location>
        <begin position="21"/>
        <end position="41"/>
    </location>
</feature>
<feature type="transmembrane region" description="Helical" evidence="1">
    <location>
        <begin position="62"/>
        <end position="82"/>
    </location>
</feature>
<feature type="transmembrane region" description="Helical" evidence="1">
    <location>
        <begin position="92"/>
        <end position="112"/>
    </location>
</feature>
<feature type="transmembrane region" description="Helical" evidence="1">
    <location>
        <begin position="131"/>
        <end position="151"/>
    </location>
</feature>
<accession>P68914</accession>
<accession>A0A1R3Y1P0</accession>
<accession>Q50621</accession>
<accession>X2BLC5</accession>